<reference key="1">
    <citation type="journal article" date="2001" name="Nucleic Acids Res.">
        <title>The Dictyostelium discoideum family of Rho-related proteins.</title>
        <authorList>
            <person name="Rivero F."/>
            <person name="Dislich H."/>
            <person name="Gloeckner G."/>
            <person name="Noegel A.A."/>
        </authorList>
    </citation>
    <scope>NUCLEOTIDE SEQUENCE [GENOMIC DNA]</scope>
    <source>
        <strain>AX4</strain>
    </source>
</reference>
<reference key="2">
    <citation type="journal article" date="2005" name="Nature">
        <title>The genome of the social amoeba Dictyostelium discoideum.</title>
        <authorList>
            <person name="Eichinger L."/>
            <person name="Pachebat J.A."/>
            <person name="Gloeckner G."/>
            <person name="Rajandream M.A."/>
            <person name="Sucgang R."/>
            <person name="Berriman M."/>
            <person name="Song J."/>
            <person name="Olsen R."/>
            <person name="Szafranski K."/>
            <person name="Xu Q."/>
            <person name="Tunggal B."/>
            <person name="Kummerfeld S."/>
            <person name="Madera M."/>
            <person name="Konfortov B.A."/>
            <person name="Rivero F."/>
            <person name="Bankier A.T."/>
            <person name="Lehmann R."/>
            <person name="Hamlin N."/>
            <person name="Davies R."/>
            <person name="Gaudet P."/>
            <person name="Fey P."/>
            <person name="Pilcher K."/>
            <person name="Chen G."/>
            <person name="Saunders D."/>
            <person name="Sodergren E.J."/>
            <person name="Davis P."/>
            <person name="Kerhornou A."/>
            <person name="Nie X."/>
            <person name="Hall N."/>
            <person name="Anjard C."/>
            <person name="Hemphill L."/>
            <person name="Bason N."/>
            <person name="Farbrother P."/>
            <person name="Desany B."/>
            <person name="Just E."/>
            <person name="Morio T."/>
            <person name="Rost R."/>
            <person name="Churcher C.M."/>
            <person name="Cooper J."/>
            <person name="Haydock S."/>
            <person name="van Driessche N."/>
            <person name="Cronin A."/>
            <person name="Goodhead I."/>
            <person name="Muzny D.M."/>
            <person name="Mourier T."/>
            <person name="Pain A."/>
            <person name="Lu M."/>
            <person name="Harper D."/>
            <person name="Lindsay R."/>
            <person name="Hauser H."/>
            <person name="James K.D."/>
            <person name="Quiles M."/>
            <person name="Madan Babu M."/>
            <person name="Saito T."/>
            <person name="Buchrieser C."/>
            <person name="Wardroper A."/>
            <person name="Felder M."/>
            <person name="Thangavelu M."/>
            <person name="Johnson D."/>
            <person name="Knights A."/>
            <person name="Loulseged H."/>
            <person name="Mungall K.L."/>
            <person name="Oliver K."/>
            <person name="Price C."/>
            <person name="Quail M.A."/>
            <person name="Urushihara H."/>
            <person name="Hernandez J."/>
            <person name="Rabbinowitsch E."/>
            <person name="Steffen D."/>
            <person name="Sanders M."/>
            <person name="Ma J."/>
            <person name="Kohara Y."/>
            <person name="Sharp S."/>
            <person name="Simmonds M.N."/>
            <person name="Spiegler S."/>
            <person name="Tivey A."/>
            <person name="Sugano S."/>
            <person name="White B."/>
            <person name="Walker D."/>
            <person name="Woodward J.R."/>
            <person name="Winckler T."/>
            <person name="Tanaka Y."/>
            <person name="Shaulsky G."/>
            <person name="Schleicher M."/>
            <person name="Weinstock G.M."/>
            <person name="Rosenthal A."/>
            <person name="Cox E.C."/>
            <person name="Chisholm R.L."/>
            <person name="Gibbs R.A."/>
            <person name="Loomis W.F."/>
            <person name="Platzer M."/>
            <person name="Kay R.R."/>
            <person name="Williams J.G."/>
            <person name="Dear P.H."/>
            <person name="Noegel A.A."/>
            <person name="Barrell B.G."/>
            <person name="Kuspa A."/>
        </authorList>
    </citation>
    <scope>NUCLEOTIDE SEQUENCE [LARGE SCALE GENOMIC DNA]</scope>
    <source>
        <strain>AX4</strain>
    </source>
</reference>
<protein>
    <recommendedName>
        <fullName>Elongator complex protein 6</fullName>
    </recommendedName>
</protein>
<feature type="chain" id="PRO_0000330361" description="Elongator complex protein 6">
    <location>
        <begin position="1"/>
        <end position="338"/>
    </location>
</feature>
<evidence type="ECO:0000250" key="1">
    <source>
        <dbReference type="UniProtKB" id="Q0PNE2"/>
    </source>
</evidence>
<evidence type="ECO:0000305" key="2"/>
<gene>
    <name type="primary">elp6</name>
    <name type="ORF">DDB_G0268624</name>
</gene>
<comment type="function">
    <text evidence="1">Component of the elongator complex which is required for multiple tRNA modifications, including mcm5U (5-methoxycarbonylmethyl uridine), mcm5s2U (5-methoxycarbonylmethyl-2-thiouridine), and ncm5U (5-carbamoylmethyl uridine) (By similarity). The elongator complex catalyzes formation of carboxymethyluridine in the wobble base at position 34 in tRNAs (By similarity).</text>
</comment>
<comment type="pathway">
    <text evidence="1">tRNA modification; 5-methoxycarbonylmethyl-2-thiouridine-tRNA biosynthesis.</text>
</comment>
<comment type="subunit">
    <text evidence="1">Component of the elongator complex.</text>
</comment>
<comment type="similarity">
    <text evidence="2">Belongs to the ELP6 family.</text>
</comment>
<comment type="caution">
    <text evidence="1">The elongator complex was originally thought to play a role in transcription elongation. However, it is no longer thought to play a direct role in this process and its primary function is thought to be in tRNA modification.</text>
</comment>
<proteinExistence type="inferred from homology"/>
<sequence length="338" mass="38417">MDLFSHLNWYSGDFMNEDGEPIKSIPSGKLILVSDTLESEGSFLIHYFLQSIFKATTSTNSSTNNNNSNNSGGVGGGACLLGLNQSLYNYFNVGRKLGYNLTTEYNKGNFTFINGLSTPYKWIIEQRLQQLEDQGIDEEPQLDSISQGFNPFPTIHLIDNKNITSSSSSSSYSNSNNKNKNNNELKDILYKIYNEFINDHKKRVMNNNNNSKTLFIIDGLNLLESHYSTNPSGSNMDILNFLQYCHNYIKENSTTCSMIILYHSDCDEDSKFFNLLQYESDLTINITGLKSGYSKDIDGQLNFIQKDEKNNTFTRVNPIHYQALDNSIRFFSMGSRIQ</sequence>
<name>ELP6_DICDI</name>
<dbReference type="EMBL" id="AF310884">
    <property type="protein sequence ID" value="AAG45111.1"/>
    <property type="molecule type" value="Genomic_DNA"/>
</dbReference>
<dbReference type="EMBL" id="AAFI02000004">
    <property type="protein sequence ID" value="EAL72901.1"/>
    <property type="molecule type" value="Genomic_DNA"/>
</dbReference>
<dbReference type="RefSeq" id="XP_647051.1">
    <property type="nucleotide sequence ID" value="XM_641959.1"/>
</dbReference>
<dbReference type="FunCoup" id="Q9GPT6">
    <property type="interactions" value="5"/>
</dbReference>
<dbReference type="STRING" id="44689.Q9GPT6"/>
<dbReference type="PaxDb" id="44689-DDB0231762"/>
<dbReference type="EnsemblProtists" id="EAL72901">
    <property type="protein sequence ID" value="EAL72901"/>
    <property type="gene ID" value="DDB_G0268624"/>
</dbReference>
<dbReference type="GeneID" id="8616746"/>
<dbReference type="KEGG" id="ddi:DDB_G0268624"/>
<dbReference type="dictyBase" id="DDB_G0268624"/>
<dbReference type="VEuPathDB" id="AmoebaDB:DDB_G0268624"/>
<dbReference type="eggNOG" id="KOG4723">
    <property type="taxonomic scope" value="Eukaryota"/>
</dbReference>
<dbReference type="HOGENOM" id="CLU_082493_0_0_1"/>
<dbReference type="InParanoid" id="Q9GPT6"/>
<dbReference type="OMA" id="KMGCNLT"/>
<dbReference type="PhylomeDB" id="Q9GPT6"/>
<dbReference type="UniPathway" id="UPA00988"/>
<dbReference type="PRO" id="PR:Q9GPT6"/>
<dbReference type="Proteomes" id="UP000002195">
    <property type="component" value="Chromosome 1"/>
</dbReference>
<dbReference type="GO" id="GO:0033588">
    <property type="term" value="C:elongator holoenzyme complex"/>
    <property type="evidence" value="ECO:0000250"/>
    <property type="project" value="UniProtKB"/>
</dbReference>
<dbReference type="GO" id="GO:0030335">
    <property type="term" value="P:positive regulation of cell migration"/>
    <property type="evidence" value="ECO:0000250"/>
    <property type="project" value="UniProtKB"/>
</dbReference>
<dbReference type="GO" id="GO:0002098">
    <property type="term" value="P:tRNA wobble uridine modification"/>
    <property type="evidence" value="ECO:0007669"/>
    <property type="project" value="InterPro"/>
</dbReference>
<dbReference type="CDD" id="cd19495">
    <property type="entry name" value="Elp6"/>
    <property type="match status" value="1"/>
</dbReference>
<dbReference type="Gene3D" id="3.40.50.300">
    <property type="entry name" value="P-loop containing nucleotide triphosphate hydrolases"/>
    <property type="match status" value="1"/>
</dbReference>
<dbReference type="InterPro" id="IPR018627">
    <property type="entry name" value="ELP6"/>
</dbReference>
<dbReference type="InterPro" id="IPR027417">
    <property type="entry name" value="P-loop_NTPase"/>
</dbReference>
<dbReference type="PANTHER" id="PTHR16184">
    <property type="entry name" value="ELONGATOR COMPLEX PROTEIN 6"/>
    <property type="match status" value="1"/>
</dbReference>
<dbReference type="PANTHER" id="PTHR16184:SF6">
    <property type="entry name" value="ELONGATOR COMPLEX PROTEIN 6"/>
    <property type="match status" value="1"/>
</dbReference>
<dbReference type="Pfam" id="PF09807">
    <property type="entry name" value="ELP6"/>
    <property type="match status" value="1"/>
</dbReference>
<accession>Q9GPT6</accession>
<accession>Q55EG9</accession>
<organism>
    <name type="scientific">Dictyostelium discoideum</name>
    <name type="common">Social amoeba</name>
    <dbReference type="NCBI Taxonomy" id="44689"/>
    <lineage>
        <taxon>Eukaryota</taxon>
        <taxon>Amoebozoa</taxon>
        <taxon>Evosea</taxon>
        <taxon>Eumycetozoa</taxon>
        <taxon>Dictyostelia</taxon>
        <taxon>Dictyosteliales</taxon>
        <taxon>Dictyosteliaceae</taxon>
        <taxon>Dictyostelium</taxon>
    </lineage>
</organism>
<keyword id="KW-1185">Reference proteome</keyword>
<keyword id="KW-0819">tRNA processing</keyword>